<keyword id="KW-1185">Reference proteome</keyword>
<protein>
    <recommendedName>
        <fullName>Uncharacterized protein Mb2952c</fullName>
    </recommendedName>
</protein>
<proteinExistence type="predicted"/>
<sequence length="245" mass="26986">MYRVFEALDELSAIVEEARGVPMTAGCVVPRGDVLELIDDIKDAIPGELDDAQDVLDARDSMLQDAKTHADSMVSSATTEAESILNHARTEADRILSDAKAQADRMVSEARQHSERMVADAREEAIRIATAAKREYEASVSRAQAECDRLIENGNISYEKAVQEGIKEQQRLVSQNEVVAAANAESTRLVDTAHAEADRLRGECDIYVDNKLAEFEEFLNGTLRSVGRGRHQLRTAAGTHDYAVR</sequence>
<dbReference type="EMBL" id="LT708304">
    <property type="protein sequence ID" value="SIU01573.1"/>
    <property type="molecule type" value="Genomic_DNA"/>
</dbReference>
<dbReference type="RefSeq" id="NP_856597.1">
    <property type="nucleotide sequence ID" value="NC_002945.3"/>
</dbReference>
<dbReference type="SMR" id="P65060"/>
<dbReference type="KEGG" id="mbo:BQ2027_MB2952C"/>
<dbReference type="PATRIC" id="fig|233413.5.peg.3239"/>
<dbReference type="Proteomes" id="UP000001419">
    <property type="component" value="Chromosome"/>
</dbReference>
<dbReference type="CDD" id="cd06503">
    <property type="entry name" value="ATP-synt_Fo_b"/>
    <property type="match status" value="1"/>
</dbReference>
<dbReference type="Gene3D" id="1.20.5.620">
    <property type="entry name" value="F1F0 ATP synthase subunit B, membrane domain"/>
    <property type="match status" value="2"/>
</dbReference>
<dbReference type="PANTHER" id="PTHR38010">
    <property type="entry name" value="SLR0848 PROTEIN"/>
    <property type="match status" value="1"/>
</dbReference>
<dbReference type="PANTHER" id="PTHR38010:SF1">
    <property type="entry name" value="SLR0848 PROTEIN"/>
    <property type="match status" value="1"/>
</dbReference>
<name>Y2952_MYCBO</name>
<reference key="1">
    <citation type="journal article" date="2003" name="Proc. Natl. Acad. Sci. U.S.A.">
        <title>The complete genome sequence of Mycobacterium bovis.</title>
        <authorList>
            <person name="Garnier T."/>
            <person name="Eiglmeier K."/>
            <person name="Camus J.-C."/>
            <person name="Medina N."/>
            <person name="Mansoor H."/>
            <person name="Pryor M."/>
            <person name="Duthoy S."/>
            <person name="Grondin S."/>
            <person name="Lacroix C."/>
            <person name="Monsempe C."/>
            <person name="Simon S."/>
            <person name="Harris B."/>
            <person name="Atkin R."/>
            <person name="Doggett J."/>
            <person name="Mayes R."/>
            <person name="Keating L."/>
            <person name="Wheeler P.R."/>
            <person name="Parkhill J."/>
            <person name="Barrell B.G."/>
            <person name="Cole S.T."/>
            <person name="Gordon S.V."/>
            <person name="Hewinson R.G."/>
        </authorList>
    </citation>
    <scope>NUCLEOTIDE SEQUENCE [LARGE SCALE GENOMIC DNA]</scope>
    <source>
        <strain>ATCC BAA-935 / AF2122/97</strain>
    </source>
</reference>
<reference key="2">
    <citation type="journal article" date="2017" name="Genome Announc.">
        <title>Updated reference genome sequence and annotation of Mycobacterium bovis AF2122/97.</title>
        <authorList>
            <person name="Malone K.M."/>
            <person name="Farrell D."/>
            <person name="Stuber T.P."/>
            <person name="Schubert O.T."/>
            <person name="Aebersold R."/>
            <person name="Robbe-Austerman S."/>
            <person name="Gordon S.V."/>
        </authorList>
    </citation>
    <scope>NUCLEOTIDE SEQUENCE [LARGE SCALE GENOMIC DNA]</scope>
    <scope>GENOME REANNOTATION</scope>
    <source>
        <strain>ATCC BAA-935 / AF2122/97</strain>
    </source>
</reference>
<gene>
    <name type="ordered locus">BQ2027_MB2952C</name>
</gene>
<organism>
    <name type="scientific">Mycobacterium bovis (strain ATCC BAA-935 / AF2122/97)</name>
    <dbReference type="NCBI Taxonomy" id="233413"/>
    <lineage>
        <taxon>Bacteria</taxon>
        <taxon>Bacillati</taxon>
        <taxon>Actinomycetota</taxon>
        <taxon>Actinomycetes</taxon>
        <taxon>Mycobacteriales</taxon>
        <taxon>Mycobacteriaceae</taxon>
        <taxon>Mycobacterium</taxon>
        <taxon>Mycobacterium tuberculosis complex</taxon>
    </lineage>
</organism>
<accession>P65060</accession>
<accession>A0A1R3Y2M7</accession>
<accession>Q10973</accession>
<accession>X2BM16</accession>
<feature type="chain" id="PRO_0000104110" description="Uncharacterized protein Mb2952c">
    <location>
        <begin position="1"/>
        <end position="245"/>
    </location>
</feature>